<comment type="catalytic activity">
    <reaction evidence="1">
        <text>tRNA(Gly) + glycine + ATP = glycyl-tRNA(Gly) + AMP + diphosphate</text>
        <dbReference type="Rhea" id="RHEA:16013"/>
        <dbReference type="Rhea" id="RHEA-COMP:9664"/>
        <dbReference type="Rhea" id="RHEA-COMP:9683"/>
        <dbReference type="ChEBI" id="CHEBI:30616"/>
        <dbReference type="ChEBI" id="CHEBI:33019"/>
        <dbReference type="ChEBI" id="CHEBI:57305"/>
        <dbReference type="ChEBI" id="CHEBI:78442"/>
        <dbReference type="ChEBI" id="CHEBI:78522"/>
        <dbReference type="ChEBI" id="CHEBI:456215"/>
        <dbReference type="EC" id="6.1.1.14"/>
    </reaction>
</comment>
<comment type="subunit">
    <text evidence="1">Tetramer of two alpha and two beta subunits.</text>
</comment>
<comment type="subcellular location">
    <subcellularLocation>
        <location evidence="1">Cytoplasm</location>
    </subcellularLocation>
</comment>
<comment type="similarity">
    <text evidence="1">Belongs to the class-II aminoacyl-tRNA synthetase family.</text>
</comment>
<keyword id="KW-0030">Aminoacyl-tRNA synthetase</keyword>
<keyword id="KW-0067">ATP-binding</keyword>
<keyword id="KW-0963">Cytoplasm</keyword>
<keyword id="KW-0436">Ligase</keyword>
<keyword id="KW-0547">Nucleotide-binding</keyword>
<keyword id="KW-0648">Protein biosynthesis</keyword>
<keyword id="KW-1185">Reference proteome</keyword>
<reference key="1">
    <citation type="submission" date="2006-03" db="EMBL/GenBank/DDBJ databases">
        <title>Complete sequence of Methylobacillus flagellatus KT.</title>
        <authorList>
            <consortium name="US DOE Joint Genome Institute"/>
            <person name="Copeland A."/>
            <person name="Lucas S."/>
            <person name="Lapidus A."/>
            <person name="Barry K."/>
            <person name="Detter J.C."/>
            <person name="Glavina del Rio T."/>
            <person name="Hammon N."/>
            <person name="Israni S."/>
            <person name="Dalin E."/>
            <person name="Tice H."/>
            <person name="Pitluck S."/>
            <person name="Brettin T."/>
            <person name="Bruce D."/>
            <person name="Han C."/>
            <person name="Tapia R."/>
            <person name="Saunders E."/>
            <person name="Gilna P."/>
            <person name="Schmutz J."/>
            <person name="Larimer F."/>
            <person name="Land M."/>
            <person name="Kyrpides N."/>
            <person name="Anderson I."/>
            <person name="Richardson P."/>
        </authorList>
    </citation>
    <scope>NUCLEOTIDE SEQUENCE [LARGE SCALE GENOMIC DNA]</scope>
    <source>
        <strain>ATCC 51484 / DSM 6875 / VKM B-1610 / KT</strain>
    </source>
</reference>
<gene>
    <name evidence="1" type="primary">glyQ</name>
    <name type="ordered locus">Mfla_0645</name>
</gene>
<dbReference type="EC" id="6.1.1.14" evidence="1"/>
<dbReference type="EMBL" id="CP000284">
    <property type="protein sequence ID" value="ABE48915.1"/>
    <property type="molecule type" value="Genomic_DNA"/>
</dbReference>
<dbReference type="RefSeq" id="WP_011479012.1">
    <property type="nucleotide sequence ID" value="NC_007947.1"/>
</dbReference>
<dbReference type="SMR" id="Q1H3M2"/>
<dbReference type="STRING" id="265072.Mfla_0645"/>
<dbReference type="KEGG" id="mfa:Mfla_0645"/>
<dbReference type="eggNOG" id="COG0752">
    <property type="taxonomic scope" value="Bacteria"/>
</dbReference>
<dbReference type="HOGENOM" id="CLU_057066_1_0_4"/>
<dbReference type="OrthoDB" id="9802183at2"/>
<dbReference type="Proteomes" id="UP000002440">
    <property type="component" value="Chromosome"/>
</dbReference>
<dbReference type="GO" id="GO:0005829">
    <property type="term" value="C:cytosol"/>
    <property type="evidence" value="ECO:0007669"/>
    <property type="project" value="TreeGrafter"/>
</dbReference>
<dbReference type="GO" id="GO:0005524">
    <property type="term" value="F:ATP binding"/>
    <property type="evidence" value="ECO:0007669"/>
    <property type="project" value="UniProtKB-UniRule"/>
</dbReference>
<dbReference type="GO" id="GO:0004820">
    <property type="term" value="F:glycine-tRNA ligase activity"/>
    <property type="evidence" value="ECO:0007669"/>
    <property type="project" value="UniProtKB-UniRule"/>
</dbReference>
<dbReference type="GO" id="GO:0006426">
    <property type="term" value="P:glycyl-tRNA aminoacylation"/>
    <property type="evidence" value="ECO:0007669"/>
    <property type="project" value="UniProtKB-UniRule"/>
</dbReference>
<dbReference type="CDD" id="cd00733">
    <property type="entry name" value="GlyRS_alpha_core"/>
    <property type="match status" value="1"/>
</dbReference>
<dbReference type="FunFam" id="3.30.930.10:FF:000006">
    <property type="entry name" value="Glycine--tRNA ligase alpha subunit"/>
    <property type="match status" value="1"/>
</dbReference>
<dbReference type="Gene3D" id="3.30.930.10">
    <property type="entry name" value="Bira Bifunctional Protein, Domain 2"/>
    <property type="match status" value="1"/>
</dbReference>
<dbReference type="Gene3D" id="1.20.58.180">
    <property type="entry name" value="Class II aaRS and biotin synthetases, domain 2"/>
    <property type="match status" value="1"/>
</dbReference>
<dbReference type="HAMAP" id="MF_00254">
    <property type="entry name" value="Gly_tRNA_synth_alpha"/>
    <property type="match status" value="1"/>
</dbReference>
<dbReference type="InterPro" id="IPR045864">
    <property type="entry name" value="aa-tRNA-synth_II/BPL/LPL"/>
</dbReference>
<dbReference type="InterPro" id="IPR006194">
    <property type="entry name" value="Gly-tRNA-synth_heterodimer"/>
</dbReference>
<dbReference type="InterPro" id="IPR002310">
    <property type="entry name" value="Gly-tRNA_ligase_asu"/>
</dbReference>
<dbReference type="NCBIfam" id="TIGR00388">
    <property type="entry name" value="glyQ"/>
    <property type="match status" value="1"/>
</dbReference>
<dbReference type="NCBIfam" id="NF006827">
    <property type="entry name" value="PRK09348.1"/>
    <property type="match status" value="1"/>
</dbReference>
<dbReference type="PANTHER" id="PTHR30075:SF2">
    <property type="entry name" value="GLYCINE--TRNA LIGASE, CHLOROPLASTIC_MITOCHONDRIAL 2"/>
    <property type="match status" value="1"/>
</dbReference>
<dbReference type="PANTHER" id="PTHR30075">
    <property type="entry name" value="GLYCYL-TRNA SYNTHETASE"/>
    <property type="match status" value="1"/>
</dbReference>
<dbReference type="Pfam" id="PF02091">
    <property type="entry name" value="tRNA-synt_2e"/>
    <property type="match status" value="1"/>
</dbReference>
<dbReference type="PRINTS" id="PR01044">
    <property type="entry name" value="TRNASYNTHGA"/>
</dbReference>
<dbReference type="SUPFAM" id="SSF55681">
    <property type="entry name" value="Class II aaRS and biotin synthetases"/>
    <property type="match status" value="1"/>
</dbReference>
<dbReference type="PROSITE" id="PS50861">
    <property type="entry name" value="AA_TRNA_LIGASE_II_GLYAB"/>
    <property type="match status" value="1"/>
</dbReference>
<organism>
    <name type="scientific">Methylobacillus flagellatus (strain ATCC 51484 / DSM 6875 / VKM B-1610 / KT)</name>
    <dbReference type="NCBI Taxonomy" id="265072"/>
    <lineage>
        <taxon>Bacteria</taxon>
        <taxon>Pseudomonadati</taxon>
        <taxon>Pseudomonadota</taxon>
        <taxon>Betaproteobacteria</taxon>
        <taxon>Nitrosomonadales</taxon>
        <taxon>Methylophilaceae</taxon>
        <taxon>Methylobacillus</taxon>
    </lineage>
</organism>
<name>SYGA_METFK</name>
<feature type="chain" id="PRO_1000047446" description="Glycine--tRNA ligase alpha subunit">
    <location>
        <begin position="1"/>
        <end position="312"/>
    </location>
</feature>
<accession>Q1H3M2</accession>
<sequence>MLTFQQIILTLQQYWDKQGCALLQPYDMEVGAGTSHTATFLRALGPEPWKAAYVQPSRRPKDGRYGDNPNRLQHYYQFQVVLKPAPGNILELYLGSLEALGFDLQQNDIRFVEDDWENPTLGAWGLGWEVWLNGMEVTQFTYFQQVGGINCRPITGEITYGLERLAMYLQGVENVYDLVYSKGVNGAPDLKYGDVFHQNEVEQSAYNFEHSDADFLFTAFNAHEKKAQELMEHKLALPAYEQVLKAAHTFNLLDARGAISVTERATYIGRIRNLARAVAASYLDSRARLGFPMAPKAWADEVLAELAKKAAA</sequence>
<protein>
    <recommendedName>
        <fullName evidence="1">Glycine--tRNA ligase alpha subunit</fullName>
        <ecNumber evidence="1">6.1.1.14</ecNumber>
    </recommendedName>
    <alternativeName>
        <fullName evidence="1">Glycyl-tRNA synthetase alpha subunit</fullName>
        <shortName evidence="1">GlyRS</shortName>
    </alternativeName>
</protein>
<evidence type="ECO:0000255" key="1">
    <source>
        <dbReference type="HAMAP-Rule" id="MF_00254"/>
    </source>
</evidence>
<proteinExistence type="inferred from homology"/>